<gene>
    <name evidence="1" type="primary">matK</name>
</gene>
<organism>
    <name type="scientific">Humulus lupulus</name>
    <name type="common">European hop</name>
    <dbReference type="NCBI Taxonomy" id="3486"/>
    <lineage>
        <taxon>Eukaryota</taxon>
        <taxon>Viridiplantae</taxon>
        <taxon>Streptophyta</taxon>
        <taxon>Embryophyta</taxon>
        <taxon>Tracheophyta</taxon>
        <taxon>Spermatophyta</taxon>
        <taxon>Magnoliopsida</taxon>
        <taxon>eudicotyledons</taxon>
        <taxon>Gunneridae</taxon>
        <taxon>Pentapetalae</taxon>
        <taxon>rosids</taxon>
        <taxon>fabids</taxon>
        <taxon>Rosales</taxon>
        <taxon>Cannabaceae</taxon>
        <taxon>Humulus</taxon>
    </lineage>
</organism>
<sequence>MAEFQGYLELDRSWQHDLLYPLIFREYIYTFVHDHGLNRNRSNLLENVGYDNKSSLLIVKRLISRMYQQNHLIISANDSNQNPVFGYNKNFYSQMISEGFAVVVEIPFSLRLVSSLKGTEVVKYYNLQSIHSTFPFFEDKFPHLNYVSDVLIPYPIHLEILVQTLRYWVKDVSSLHLLRLFLHEYYSWNRFLIPNKSISIFSKSNLRFFLFLYNSHVCEYESILLFLRNQSSHLRLTSSGGFFERIYFYGKIKHPVEEVFADDFPTSLWFFQDLVIHYVRYQGKSILASKDMPLLMNKWKYYLVHLWQCHFYVWSQAGSIYINQLSKHAFGFLGYLSSMRINLSVVRSQMLENSFLMDNAMKKIDTLIPISPLIGSLAKMKFCNVVGQPLSKSTWADLSDFDIIDRFARICRNLFHYYSGSSKKKSLYRVKYILRLSCVKTLARKHKSTVRTFLKRLGSELLDEFFTEEEEVLSLIFPRTYSTLRRLYKGRIWYLDIFCINDLVNHE</sequence>
<proteinExistence type="inferred from homology"/>
<keyword id="KW-0150">Chloroplast</keyword>
<keyword id="KW-0507">mRNA processing</keyword>
<keyword id="KW-0934">Plastid</keyword>
<keyword id="KW-0694">RNA-binding</keyword>
<keyword id="KW-0819">tRNA processing</keyword>
<geneLocation type="chloroplast"/>
<name>MATK_HUMLU</name>
<protein>
    <recommendedName>
        <fullName evidence="1">Maturase K</fullName>
    </recommendedName>
    <alternativeName>
        <fullName evidence="1">Intron maturase</fullName>
    </alternativeName>
</protein>
<comment type="function">
    <text evidence="1">Usually encoded in the trnK tRNA gene intron. Probably assists in splicing its own and other chloroplast group II introns.</text>
</comment>
<comment type="subcellular location">
    <subcellularLocation>
        <location>Plastid</location>
        <location>Chloroplast</location>
    </subcellularLocation>
</comment>
<comment type="similarity">
    <text evidence="1">Belongs to the intron maturase 2 family. MatK subfamily.</text>
</comment>
<evidence type="ECO:0000255" key="1">
    <source>
        <dbReference type="HAMAP-Rule" id="MF_01390"/>
    </source>
</evidence>
<dbReference type="EMBL" id="AF345318">
    <property type="protein sequence ID" value="AAL15624.1"/>
    <property type="molecule type" value="Genomic_DNA"/>
</dbReference>
<dbReference type="RefSeq" id="YP_009170408.1">
    <property type="nucleotide sequence ID" value="NC_028032.1"/>
</dbReference>
<dbReference type="GeneID" id="26044190"/>
<dbReference type="GO" id="GO:0009507">
    <property type="term" value="C:chloroplast"/>
    <property type="evidence" value="ECO:0007669"/>
    <property type="project" value="UniProtKB-SubCell"/>
</dbReference>
<dbReference type="GO" id="GO:0003723">
    <property type="term" value="F:RNA binding"/>
    <property type="evidence" value="ECO:0007669"/>
    <property type="project" value="UniProtKB-KW"/>
</dbReference>
<dbReference type="GO" id="GO:0006397">
    <property type="term" value="P:mRNA processing"/>
    <property type="evidence" value="ECO:0007669"/>
    <property type="project" value="UniProtKB-KW"/>
</dbReference>
<dbReference type="GO" id="GO:0008380">
    <property type="term" value="P:RNA splicing"/>
    <property type="evidence" value="ECO:0007669"/>
    <property type="project" value="UniProtKB-UniRule"/>
</dbReference>
<dbReference type="GO" id="GO:0008033">
    <property type="term" value="P:tRNA processing"/>
    <property type="evidence" value="ECO:0007669"/>
    <property type="project" value="UniProtKB-KW"/>
</dbReference>
<dbReference type="HAMAP" id="MF_01390">
    <property type="entry name" value="MatK"/>
    <property type="match status" value="1"/>
</dbReference>
<dbReference type="InterPro" id="IPR024937">
    <property type="entry name" value="Domain_X"/>
</dbReference>
<dbReference type="InterPro" id="IPR002866">
    <property type="entry name" value="Maturase_MatK"/>
</dbReference>
<dbReference type="InterPro" id="IPR024942">
    <property type="entry name" value="Maturase_MatK_N"/>
</dbReference>
<dbReference type="PANTHER" id="PTHR34811">
    <property type="entry name" value="MATURASE K"/>
    <property type="match status" value="1"/>
</dbReference>
<dbReference type="PANTHER" id="PTHR34811:SF1">
    <property type="entry name" value="MATURASE K"/>
    <property type="match status" value="1"/>
</dbReference>
<dbReference type="Pfam" id="PF01348">
    <property type="entry name" value="Intron_maturas2"/>
    <property type="match status" value="1"/>
</dbReference>
<dbReference type="Pfam" id="PF01824">
    <property type="entry name" value="MatK_N"/>
    <property type="match status" value="1"/>
</dbReference>
<feature type="chain" id="PRO_0000143428" description="Maturase K">
    <location>
        <begin position="1"/>
        <end position="507"/>
    </location>
</feature>
<accession>Q95BX9</accession>
<reference key="1">
    <citation type="journal article" date="2001" name="Plant Syst. Evol.">
        <title>Further evidence on paraphyly of the Celtidaceae from the chloroplast gene matK.</title>
        <authorList>
            <person name="Song B.-H."/>
            <person name="Wang X.-Q."/>
            <person name="Li F.-Z."/>
            <person name="Hong D.-Y."/>
        </authorList>
    </citation>
    <scope>NUCLEOTIDE SEQUENCE [GENOMIC DNA]</scope>
</reference>